<gene>
    <name evidence="1" type="primary">rps11</name>
</gene>
<dbReference type="EMBL" id="DQ897681">
    <property type="protein sequence ID" value="ABI17342.1"/>
    <property type="molecule type" value="Genomic_DNA"/>
</dbReference>
<dbReference type="EMBL" id="DQ897681">
    <property type="protein sequence ID" value="ABI17298.1"/>
    <property type="molecule type" value="Genomic_DNA"/>
</dbReference>
<dbReference type="RefSeq" id="YP_784106.1">
    <property type="nucleotide sequence ID" value="NC_008454.1"/>
</dbReference>
<dbReference type="RefSeq" id="YP_784150.1">
    <property type="nucleotide sequence ID" value="NC_008454.1"/>
</dbReference>
<dbReference type="SMR" id="Q06FN1"/>
<dbReference type="GeneID" id="4362837"/>
<dbReference type="GeneID" id="4362962"/>
<dbReference type="GO" id="GO:0009507">
    <property type="term" value="C:chloroplast"/>
    <property type="evidence" value="ECO:0007669"/>
    <property type="project" value="UniProtKB-SubCell"/>
</dbReference>
<dbReference type="GO" id="GO:1990904">
    <property type="term" value="C:ribonucleoprotein complex"/>
    <property type="evidence" value="ECO:0007669"/>
    <property type="project" value="UniProtKB-KW"/>
</dbReference>
<dbReference type="GO" id="GO:0005840">
    <property type="term" value="C:ribosome"/>
    <property type="evidence" value="ECO:0007669"/>
    <property type="project" value="UniProtKB-KW"/>
</dbReference>
<dbReference type="GO" id="GO:0019843">
    <property type="term" value="F:rRNA binding"/>
    <property type="evidence" value="ECO:0007669"/>
    <property type="project" value="UniProtKB-UniRule"/>
</dbReference>
<dbReference type="GO" id="GO:0003735">
    <property type="term" value="F:structural constituent of ribosome"/>
    <property type="evidence" value="ECO:0007669"/>
    <property type="project" value="InterPro"/>
</dbReference>
<dbReference type="GO" id="GO:0006412">
    <property type="term" value="P:translation"/>
    <property type="evidence" value="ECO:0007669"/>
    <property type="project" value="UniProtKB-UniRule"/>
</dbReference>
<dbReference type="Gene3D" id="3.30.420.80">
    <property type="entry name" value="Ribosomal protein S11"/>
    <property type="match status" value="1"/>
</dbReference>
<dbReference type="HAMAP" id="MF_01310">
    <property type="entry name" value="Ribosomal_uS11"/>
    <property type="match status" value="1"/>
</dbReference>
<dbReference type="InterPro" id="IPR001971">
    <property type="entry name" value="Ribosomal_uS11"/>
</dbReference>
<dbReference type="InterPro" id="IPR018102">
    <property type="entry name" value="Ribosomal_uS11_CS"/>
</dbReference>
<dbReference type="InterPro" id="IPR036967">
    <property type="entry name" value="Ribosomal_uS11_sf"/>
</dbReference>
<dbReference type="NCBIfam" id="NF003698">
    <property type="entry name" value="PRK05309.1"/>
    <property type="match status" value="1"/>
</dbReference>
<dbReference type="PANTHER" id="PTHR11759">
    <property type="entry name" value="40S RIBOSOMAL PROTEIN S14/30S RIBOSOMAL PROTEIN S11"/>
    <property type="match status" value="1"/>
</dbReference>
<dbReference type="Pfam" id="PF00411">
    <property type="entry name" value="Ribosomal_S11"/>
    <property type="match status" value="1"/>
</dbReference>
<dbReference type="PIRSF" id="PIRSF002131">
    <property type="entry name" value="Ribosomal_S11"/>
    <property type="match status" value="1"/>
</dbReference>
<dbReference type="SUPFAM" id="SSF53137">
    <property type="entry name" value="Translational machinery components"/>
    <property type="match status" value="1"/>
</dbReference>
<dbReference type="PROSITE" id="PS00054">
    <property type="entry name" value="RIBOSOMAL_S11"/>
    <property type="match status" value="1"/>
</dbReference>
<geneLocation type="chloroplast"/>
<sequence>MAKTIRRYSSFRLRNRRIRSRKSARKIPKGIIHVQASFSNTIVTVTDVGGRVVTSASAGACGFKGRRRGTPFAAQTTAENAIRTVVTQGMHRAVVLVKGVGRGRDAALRAILRSGVRLHLLRDRTPLPHNGCRPPKRRRT</sequence>
<proteinExistence type="inferred from homology"/>
<keyword id="KW-0150">Chloroplast</keyword>
<keyword id="KW-0934">Plastid</keyword>
<keyword id="KW-0687">Ribonucleoprotein</keyword>
<keyword id="KW-0689">Ribosomal protein</keyword>
<keyword id="KW-0694">RNA-binding</keyword>
<keyword id="KW-0699">rRNA-binding</keyword>
<accession>Q06FN1</accession>
<reference key="1">
    <citation type="journal article" date="2006" name="Mol. Biol. Evol.">
        <title>The complete chloroplast genome sequence of Pelargonium x hortorum: organization and evolution of the largest and most highly rearranged chloroplast genome of land plants.</title>
        <authorList>
            <person name="Chumley T.W."/>
            <person name="Palmer J.D."/>
            <person name="Mower J.P."/>
            <person name="Fourcade H.M."/>
            <person name="Calie P.J."/>
            <person name="Boore J.L."/>
            <person name="Jansen R.K."/>
        </authorList>
    </citation>
    <scope>NUCLEOTIDE SEQUENCE [LARGE SCALE GENOMIC DNA]</scope>
    <source>
        <strain>cv. Ringo White</strain>
    </source>
</reference>
<name>RR11_PELHO</name>
<organism>
    <name type="scientific">Pelargonium hortorum</name>
    <name type="common">Common geranium</name>
    <name type="synonym">Pelargonium inquinans x Pelargonium zonale</name>
    <dbReference type="NCBI Taxonomy" id="4031"/>
    <lineage>
        <taxon>Eukaryota</taxon>
        <taxon>Viridiplantae</taxon>
        <taxon>Streptophyta</taxon>
        <taxon>Embryophyta</taxon>
        <taxon>Tracheophyta</taxon>
        <taxon>Spermatophyta</taxon>
        <taxon>Magnoliopsida</taxon>
        <taxon>eudicotyledons</taxon>
        <taxon>Gunneridae</taxon>
        <taxon>Pentapetalae</taxon>
        <taxon>rosids</taxon>
        <taxon>malvids</taxon>
        <taxon>Geraniales</taxon>
        <taxon>Geraniaceae</taxon>
        <taxon>Pelargonium</taxon>
    </lineage>
</organism>
<evidence type="ECO:0000255" key="1">
    <source>
        <dbReference type="HAMAP-Rule" id="MF_01310"/>
    </source>
</evidence>
<evidence type="ECO:0000305" key="2"/>
<comment type="subunit">
    <text evidence="1">Part of the 30S ribosomal subunit.</text>
</comment>
<comment type="subcellular location">
    <subcellularLocation>
        <location>Plastid</location>
        <location>Chloroplast</location>
    </subcellularLocation>
</comment>
<comment type="similarity">
    <text evidence="1">Belongs to the universal ribosomal protein uS11 family.</text>
</comment>
<feature type="chain" id="PRO_0000276654" description="Small ribosomal subunit protein uS11c">
    <location>
        <begin position="1"/>
        <end position="140"/>
    </location>
</feature>
<protein>
    <recommendedName>
        <fullName evidence="1">Small ribosomal subunit protein uS11c</fullName>
    </recommendedName>
    <alternativeName>
        <fullName evidence="2">30S ribosomal protein S11, chloroplastic</fullName>
    </alternativeName>
</protein>